<name>GSHB_GLOVI</name>
<gene>
    <name evidence="2" type="primary">gshB</name>
    <name type="ordered locus">gll3682</name>
</gene>
<keyword id="KW-0067">ATP-binding</keyword>
<keyword id="KW-0317">Glutathione biosynthesis</keyword>
<keyword id="KW-0436">Ligase</keyword>
<keyword id="KW-0460">Magnesium</keyword>
<keyword id="KW-0464">Manganese</keyword>
<keyword id="KW-0479">Metal-binding</keyword>
<keyword id="KW-0547">Nucleotide-binding</keyword>
<keyword id="KW-1185">Reference proteome</keyword>
<evidence type="ECO:0000250" key="1"/>
<evidence type="ECO:0000255" key="2">
    <source>
        <dbReference type="HAMAP-Rule" id="MF_00162"/>
    </source>
</evidence>
<accession>Q7NF44</accession>
<reference key="1">
    <citation type="journal article" date="2003" name="DNA Res.">
        <title>Complete genome structure of Gloeobacter violaceus PCC 7421, a cyanobacterium that lacks thylakoids.</title>
        <authorList>
            <person name="Nakamura Y."/>
            <person name="Kaneko T."/>
            <person name="Sato S."/>
            <person name="Mimuro M."/>
            <person name="Miyashita H."/>
            <person name="Tsuchiya T."/>
            <person name="Sasamoto S."/>
            <person name="Watanabe A."/>
            <person name="Kawashima K."/>
            <person name="Kishida Y."/>
            <person name="Kiyokawa C."/>
            <person name="Kohara M."/>
            <person name="Matsumoto M."/>
            <person name="Matsuno A."/>
            <person name="Nakazaki N."/>
            <person name="Shimpo S."/>
            <person name="Takeuchi C."/>
            <person name="Yamada M."/>
            <person name="Tabata S."/>
        </authorList>
    </citation>
    <scope>NUCLEOTIDE SEQUENCE [LARGE SCALE GENOMIC DNA]</scope>
    <source>
        <strain>ATCC 29082 / PCC 7421</strain>
    </source>
</reference>
<feature type="chain" id="PRO_0000197468" description="Glutathione synthetase">
    <location>
        <begin position="1"/>
        <end position="324"/>
    </location>
</feature>
<feature type="domain" description="ATP-grasp" evidence="2">
    <location>
        <begin position="129"/>
        <end position="313"/>
    </location>
</feature>
<feature type="binding site" evidence="2">
    <location>
        <begin position="155"/>
        <end position="211"/>
    </location>
    <ligand>
        <name>ATP</name>
        <dbReference type="ChEBI" id="CHEBI:30616"/>
    </ligand>
</feature>
<feature type="binding site" evidence="2">
    <location>
        <position position="284"/>
    </location>
    <ligand>
        <name>Mg(2+)</name>
        <dbReference type="ChEBI" id="CHEBI:18420"/>
    </ligand>
</feature>
<feature type="binding site" evidence="2">
    <location>
        <position position="286"/>
    </location>
    <ligand>
        <name>Mg(2+)</name>
        <dbReference type="ChEBI" id="CHEBI:18420"/>
    </ligand>
</feature>
<organism>
    <name type="scientific">Gloeobacter violaceus (strain ATCC 29082 / PCC 7421)</name>
    <dbReference type="NCBI Taxonomy" id="251221"/>
    <lineage>
        <taxon>Bacteria</taxon>
        <taxon>Bacillati</taxon>
        <taxon>Cyanobacteriota</taxon>
        <taxon>Cyanophyceae</taxon>
        <taxon>Gloeobacterales</taxon>
        <taxon>Gloeobacteraceae</taxon>
        <taxon>Gloeobacter</taxon>
    </lineage>
</organism>
<sequence>MKILFIVDPLETLKPGHDTSVALMQAAARRGHSVWAAEVGDLQVHHHRAAAQVRTLTIHPGRTPFYTVEAVGFYPLSEADVIWMRKDPPVTSAYLWATQVLDLVNAGRGDGRTTFVLNRPSGLRNDNEKLYALHFPDLVPETRVCTHRQDILDFVDIHGRAVIKPLDGKGGEGIFLLARADRNLNAIIEASTAYGTRHVMVQRYLEESRQGDKRIVLLAGEPIGALLRVPREDDVRGNMAAGGRVVKTTLTERDREICRVVGPRLVADGHYFVGIDVIGAYLTEINVTSPTGICEIDVLDGVVLEDEIVDWLVEYTRPALARNL</sequence>
<proteinExistence type="inferred from homology"/>
<comment type="catalytic activity">
    <reaction evidence="2">
        <text>gamma-L-glutamyl-L-cysteine + glycine + ATP = glutathione + ADP + phosphate + H(+)</text>
        <dbReference type="Rhea" id="RHEA:13557"/>
        <dbReference type="ChEBI" id="CHEBI:15378"/>
        <dbReference type="ChEBI" id="CHEBI:30616"/>
        <dbReference type="ChEBI" id="CHEBI:43474"/>
        <dbReference type="ChEBI" id="CHEBI:57305"/>
        <dbReference type="ChEBI" id="CHEBI:57925"/>
        <dbReference type="ChEBI" id="CHEBI:58173"/>
        <dbReference type="ChEBI" id="CHEBI:456216"/>
        <dbReference type="EC" id="6.3.2.3"/>
    </reaction>
</comment>
<comment type="cofactor">
    <cofactor evidence="1">
        <name>Mg(2+)</name>
        <dbReference type="ChEBI" id="CHEBI:18420"/>
    </cofactor>
    <cofactor evidence="1">
        <name>Mn(2+)</name>
        <dbReference type="ChEBI" id="CHEBI:29035"/>
    </cofactor>
    <text evidence="1">Binds 1 Mg(2+) or Mn(2+) ion per subunit.</text>
</comment>
<comment type="pathway">
    <text evidence="2">Sulfur metabolism; glutathione biosynthesis; glutathione from L-cysteine and L-glutamate: step 2/2.</text>
</comment>
<comment type="similarity">
    <text evidence="2">Belongs to the prokaryotic GSH synthase family.</text>
</comment>
<protein>
    <recommendedName>
        <fullName evidence="2">Glutathione synthetase</fullName>
        <ecNumber evidence="2">6.3.2.3</ecNumber>
    </recommendedName>
    <alternativeName>
        <fullName evidence="2">GSH synthetase</fullName>
        <shortName evidence="2">GSH-S</shortName>
        <shortName evidence="2">GSHase</shortName>
    </alternativeName>
    <alternativeName>
        <fullName evidence="2">Glutathione synthase</fullName>
    </alternativeName>
</protein>
<dbReference type="EC" id="6.3.2.3" evidence="2"/>
<dbReference type="EMBL" id="BA000045">
    <property type="protein sequence ID" value="BAC91623.1"/>
    <property type="molecule type" value="Genomic_DNA"/>
</dbReference>
<dbReference type="RefSeq" id="NP_926628.1">
    <property type="nucleotide sequence ID" value="NC_005125.1"/>
</dbReference>
<dbReference type="RefSeq" id="WP_011143671.1">
    <property type="nucleotide sequence ID" value="NC_005125.1"/>
</dbReference>
<dbReference type="SMR" id="Q7NF44"/>
<dbReference type="STRING" id="251221.gene:10761197"/>
<dbReference type="EnsemblBacteria" id="BAC91623">
    <property type="protein sequence ID" value="BAC91623"/>
    <property type="gene ID" value="BAC91623"/>
</dbReference>
<dbReference type="KEGG" id="gvi:gll3682"/>
<dbReference type="PATRIC" id="fig|251221.4.peg.3716"/>
<dbReference type="eggNOG" id="COG0189">
    <property type="taxonomic scope" value="Bacteria"/>
</dbReference>
<dbReference type="HOGENOM" id="CLU_068239_0_0_3"/>
<dbReference type="InParanoid" id="Q7NF44"/>
<dbReference type="OrthoDB" id="9785415at2"/>
<dbReference type="PhylomeDB" id="Q7NF44"/>
<dbReference type="UniPathway" id="UPA00142">
    <property type="reaction ID" value="UER00210"/>
</dbReference>
<dbReference type="Proteomes" id="UP000000557">
    <property type="component" value="Chromosome"/>
</dbReference>
<dbReference type="GO" id="GO:0005737">
    <property type="term" value="C:cytoplasm"/>
    <property type="evidence" value="ECO:0000318"/>
    <property type="project" value="GO_Central"/>
</dbReference>
<dbReference type="GO" id="GO:0005524">
    <property type="term" value="F:ATP binding"/>
    <property type="evidence" value="ECO:0007669"/>
    <property type="project" value="UniProtKB-UniRule"/>
</dbReference>
<dbReference type="GO" id="GO:0004363">
    <property type="term" value="F:glutathione synthase activity"/>
    <property type="evidence" value="ECO:0000318"/>
    <property type="project" value="GO_Central"/>
</dbReference>
<dbReference type="GO" id="GO:0046872">
    <property type="term" value="F:metal ion binding"/>
    <property type="evidence" value="ECO:0007669"/>
    <property type="project" value="UniProtKB-KW"/>
</dbReference>
<dbReference type="Gene3D" id="3.40.50.20">
    <property type="match status" value="1"/>
</dbReference>
<dbReference type="Gene3D" id="3.30.1490.20">
    <property type="entry name" value="ATP-grasp fold, A domain"/>
    <property type="match status" value="1"/>
</dbReference>
<dbReference type="Gene3D" id="3.30.470.20">
    <property type="entry name" value="ATP-grasp fold, B domain"/>
    <property type="match status" value="1"/>
</dbReference>
<dbReference type="HAMAP" id="MF_00162">
    <property type="entry name" value="GSH_S"/>
    <property type="match status" value="1"/>
</dbReference>
<dbReference type="InterPro" id="IPR011761">
    <property type="entry name" value="ATP-grasp"/>
</dbReference>
<dbReference type="InterPro" id="IPR013815">
    <property type="entry name" value="ATP_grasp_subdomain_1"/>
</dbReference>
<dbReference type="InterPro" id="IPR006284">
    <property type="entry name" value="Glut_synth_pro"/>
</dbReference>
<dbReference type="InterPro" id="IPR004218">
    <property type="entry name" value="GSHS_ATP-bd"/>
</dbReference>
<dbReference type="InterPro" id="IPR004215">
    <property type="entry name" value="GSHS_N"/>
</dbReference>
<dbReference type="InterPro" id="IPR016185">
    <property type="entry name" value="PreATP-grasp_dom_sf"/>
</dbReference>
<dbReference type="NCBIfam" id="TIGR01380">
    <property type="entry name" value="glut_syn"/>
    <property type="match status" value="1"/>
</dbReference>
<dbReference type="NCBIfam" id="NF003573">
    <property type="entry name" value="PRK05246.1"/>
    <property type="match status" value="1"/>
</dbReference>
<dbReference type="PANTHER" id="PTHR21621:SF4">
    <property type="entry name" value="GLUTATHIONE SYNTHETASE"/>
    <property type="match status" value="1"/>
</dbReference>
<dbReference type="PANTHER" id="PTHR21621">
    <property type="entry name" value="RIBOSOMAL PROTEIN S6 MODIFICATION PROTEIN"/>
    <property type="match status" value="1"/>
</dbReference>
<dbReference type="Pfam" id="PF02955">
    <property type="entry name" value="GSH-S_ATP"/>
    <property type="match status" value="1"/>
</dbReference>
<dbReference type="Pfam" id="PF02951">
    <property type="entry name" value="GSH-S_N"/>
    <property type="match status" value="1"/>
</dbReference>
<dbReference type="SUPFAM" id="SSF56059">
    <property type="entry name" value="Glutathione synthetase ATP-binding domain-like"/>
    <property type="match status" value="1"/>
</dbReference>
<dbReference type="SUPFAM" id="SSF52440">
    <property type="entry name" value="PreATP-grasp domain"/>
    <property type="match status" value="1"/>
</dbReference>
<dbReference type="PROSITE" id="PS50975">
    <property type="entry name" value="ATP_GRASP"/>
    <property type="match status" value="1"/>
</dbReference>